<proteinExistence type="inferred from homology"/>
<gene>
    <name evidence="1" type="primary">obg</name>
    <name type="ordered locus">CMM_1491</name>
</gene>
<feature type="chain" id="PRO_0000385835" description="GTPase Obg">
    <location>
        <begin position="1"/>
        <end position="512"/>
    </location>
</feature>
<feature type="domain" description="Obg" evidence="3">
    <location>
        <begin position="2"/>
        <end position="159"/>
    </location>
</feature>
<feature type="domain" description="OBG-type G" evidence="1">
    <location>
        <begin position="160"/>
        <end position="336"/>
    </location>
</feature>
<feature type="domain" description="OCT" evidence="2">
    <location>
        <begin position="355"/>
        <end position="439"/>
    </location>
</feature>
<feature type="region of interest" description="Disordered" evidence="4">
    <location>
        <begin position="491"/>
        <end position="512"/>
    </location>
</feature>
<feature type="compositionally biased region" description="Acidic residues" evidence="4">
    <location>
        <begin position="497"/>
        <end position="512"/>
    </location>
</feature>
<feature type="binding site" evidence="1">
    <location>
        <begin position="166"/>
        <end position="173"/>
    </location>
    <ligand>
        <name>GTP</name>
        <dbReference type="ChEBI" id="CHEBI:37565"/>
    </ligand>
</feature>
<feature type="binding site" evidence="1">
    <location>
        <position position="173"/>
    </location>
    <ligand>
        <name>Mg(2+)</name>
        <dbReference type="ChEBI" id="CHEBI:18420"/>
    </ligand>
</feature>
<feature type="binding site" evidence="1">
    <location>
        <begin position="191"/>
        <end position="195"/>
    </location>
    <ligand>
        <name>GTP</name>
        <dbReference type="ChEBI" id="CHEBI:37565"/>
    </ligand>
</feature>
<feature type="binding site" evidence="1">
    <location>
        <position position="193"/>
    </location>
    <ligand>
        <name>Mg(2+)</name>
        <dbReference type="ChEBI" id="CHEBI:18420"/>
    </ligand>
</feature>
<feature type="binding site" evidence="1">
    <location>
        <begin position="212"/>
        <end position="215"/>
    </location>
    <ligand>
        <name>GTP</name>
        <dbReference type="ChEBI" id="CHEBI:37565"/>
    </ligand>
</feature>
<feature type="binding site" evidence="1">
    <location>
        <begin position="288"/>
        <end position="291"/>
    </location>
    <ligand>
        <name>GTP</name>
        <dbReference type="ChEBI" id="CHEBI:37565"/>
    </ligand>
</feature>
<feature type="binding site" evidence="1">
    <location>
        <begin position="317"/>
        <end position="319"/>
    </location>
    <ligand>
        <name>GTP</name>
        <dbReference type="ChEBI" id="CHEBI:37565"/>
    </ligand>
</feature>
<protein>
    <recommendedName>
        <fullName evidence="1">GTPase Obg</fullName>
        <ecNumber evidence="1">3.6.5.-</ecNumber>
    </recommendedName>
    <alternativeName>
        <fullName evidence="1">GTP-binding protein Obg</fullName>
    </alternativeName>
</protein>
<dbReference type="EC" id="3.6.5.-" evidence="1"/>
<dbReference type="EMBL" id="AM711867">
    <property type="protein sequence ID" value="CAN01537.1"/>
    <property type="molecule type" value="Genomic_DNA"/>
</dbReference>
<dbReference type="RefSeq" id="WP_012038177.1">
    <property type="nucleotide sequence ID" value="NC_009480.1"/>
</dbReference>
<dbReference type="SMR" id="A5CR32"/>
<dbReference type="KEGG" id="cmi:CMM_1491"/>
<dbReference type="eggNOG" id="COG0536">
    <property type="taxonomic scope" value="Bacteria"/>
</dbReference>
<dbReference type="HOGENOM" id="CLU_011747_1_1_11"/>
<dbReference type="OrthoDB" id="9807318at2"/>
<dbReference type="Proteomes" id="UP000001564">
    <property type="component" value="Chromosome"/>
</dbReference>
<dbReference type="GO" id="GO:0005737">
    <property type="term" value="C:cytoplasm"/>
    <property type="evidence" value="ECO:0007669"/>
    <property type="project" value="UniProtKB-SubCell"/>
</dbReference>
<dbReference type="GO" id="GO:0005525">
    <property type="term" value="F:GTP binding"/>
    <property type="evidence" value="ECO:0007669"/>
    <property type="project" value="UniProtKB-UniRule"/>
</dbReference>
<dbReference type="GO" id="GO:0003924">
    <property type="term" value="F:GTPase activity"/>
    <property type="evidence" value="ECO:0007669"/>
    <property type="project" value="UniProtKB-UniRule"/>
</dbReference>
<dbReference type="GO" id="GO:0000287">
    <property type="term" value="F:magnesium ion binding"/>
    <property type="evidence" value="ECO:0007669"/>
    <property type="project" value="InterPro"/>
</dbReference>
<dbReference type="GO" id="GO:0042254">
    <property type="term" value="P:ribosome biogenesis"/>
    <property type="evidence" value="ECO:0007669"/>
    <property type="project" value="UniProtKB-UniRule"/>
</dbReference>
<dbReference type="CDD" id="cd01898">
    <property type="entry name" value="Obg"/>
    <property type="match status" value="1"/>
</dbReference>
<dbReference type="FunFam" id="2.70.210.12:FF:000001">
    <property type="entry name" value="GTPase Obg"/>
    <property type="match status" value="1"/>
</dbReference>
<dbReference type="Gene3D" id="3.30.300.350">
    <property type="entry name" value="GTP-binding protein OBG, C-terminal domain"/>
    <property type="match status" value="1"/>
</dbReference>
<dbReference type="Gene3D" id="2.70.210.12">
    <property type="entry name" value="GTP1/OBG domain"/>
    <property type="match status" value="1"/>
</dbReference>
<dbReference type="Gene3D" id="3.40.50.300">
    <property type="entry name" value="P-loop containing nucleotide triphosphate hydrolases"/>
    <property type="match status" value="1"/>
</dbReference>
<dbReference type="HAMAP" id="MF_01454">
    <property type="entry name" value="GTPase_Obg"/>
    <property type="match status" value="1"/>
</dbReference>
<dbReference type="InterPro" id="IPR031167">
    <property type="entry name" value="G_OBG"/>
</dbReference>
<dbReference type="InterPro" id="IPR006073">
    <property type="entry name" value="GTP-bd"/>
</dbReference>
<dbReference type="InterPro" id="IPR014100">
    <property type="entry name" value="GTP-bd_Obg/CgtA"/>
</dbReference>
<dbReference type="InterPro" id="IPR036346">
    <property type="entry name" value="GTP-bd_prot_GTP1/OBG_C_sf"/>
</dbReference>
<dbReference type="InterPro" id="IPR006074">
    <property type="entry name" value="GTP1-OBG_CS"/>
</dbReference>
<dbReference type="InterPro" id="IPR006169">
    <property type="entry name" value="GTP1_OBG_dom"/>
</dbReference>
<dbReference type="InterPro" id="IPR036726">
    <property type="entry name" value="GTP1_OBG_dom_sf"/>
</dbReference>
<dbReference type="InterPro" id="IPR045086">
    <property type="entry name" value="OBG_GTPase"/>
</dbReference>
<dbReference type="InterPro" id="IPR015349">
    <property type="entry name" value="OCT_dom"/>
</dbReference>
<dbReference type="InterPro" id="IPR027417">
    <property type="entry name" value="P-loop_NTPase"/>
</dbReference>
<dbReference type="NCBIfam" id="TIGR02729">
    <property type="entry name" value="Obg_CgtA"/>
    <property type="match status" value="1"/>
</dbReference>
<dbReference type="NCBIfam" id="TIGR03595">
    <property type="entry name" value="Obg_CgtA_exten"/>
    <property type="match status" value="1"/>
</dbReference>
<dbReference type="NCBIfam" id="NF008954">
    <property type="entry name" value="PRK12296.1"/>
    <property type="match status" value="1"/>
</dbReference>
<dbReference type="NCBIfam" id="NF008955">
    <property type="entry name" value="PRK12297.1"/>
    <property type="match status" value="1"/>
</dbReference>
<dbReference type="NCBIfam" id="NF008956">
    <property type="entry name" value="PRK12299.1"/>
    <property type="match status" value="1"/>
</dbReference>
<dbReference type="PANTHER" id="PTHR11702">
    <property type="entry name" value="DEVELOPMENTALLY REGULATED GTP-BINDING PROTEIN-RELATED"/>
    <property type="match status" value="1"/>
</dbReference>
<dbReference type="PANTHER" id="PTHR11702:SF31">
    <property type="entry name" value="MITOCHONDRIAL RIBOSOME-ASSOCIATED GTPASE 2"/>
    <property type="match status" value="1"/>
</dbReference>
<dbReference type="Pfam" id="PF09269">
    <property type="entry name" value="DUF1967"/>
    <property type="match status" value="1"/>
</dbReference>
<dbReference type="Pfam" id="PF01018">
    <property type="entry name" value="GTP1_OBG"/>
    <property type="match status" value="1"/>
</dbReference>
<dbReference type="Pfam" id="PF01926">
    <property type="entry name" value="MMR_HSR1"/>
    <property type="match status" value="1"/>
</dbReference>
<dbReference type="PRINTS" id="PR00326">
    <property type="entry name" value="GTP1OBG"/>
</dbReference>
<dbReference type="SUPFAM" id="SSF102741">
    <property type="entry name" value="Obg GTP-binding protein C-terminal domain"/>
    <property type="match status" value="1"/>
</dbReference>
<dbReference type="SUPFAM" id="SSF82051">
    <property type="entry name" value="Obg GTP-binding protein N-terminal domain"/>
    <property type="match status" value="1"/>
</dbReference>
<dbReference type="SUPFAM" id="SSF52540">
    <property type="entry name" value="P-loop containing nucleoside triphosphate hydrolases"/>
    <property type="match status" value="1"/>
</dbReference>
<dbReference type="PROSITE" id="PS51710">
    <property type="entry name" value="G_OBG"/>
    <property type="match status" value="1"/>
</dbReference>
<dbReference type="PROSITE" id="PS00905">
    <property type="entry name" value="GTP1_OBG"/>
    <property type="match status" value="1"/>
</dbReference>
<dbReference type="PROSITE" id="PS51883">
    <property type="entry name" value="OBG"/>
    <property type="match status" value="1"/>
</dbReference>
<dbReference type="PROSITE" id="PS51881">
    <property type="entry name" value="OCT"/>
    <property type="match status" value="1"/>
</dbReference>
<name>OBG_CLAM3</name>
<keyword id="KW-0963">Cytoplasm</keyword>
<keyword id="KW-0342">GTP-binding</keyword>
<keyword id="KW-0378">Hydrolase</keyword>
<keyword id="KW-0460">Magnesium</keyword>
<keyword id="KW-0479">Metal-binding</keyword>
<keyword id="KW-0547">Nucleotide-binding</keyword>
<comment type="function">
    <text evidence="1">An essential GTPase which binds GTP, GDP and possibly (p)ppGpp with moderate affinity, with high nucleotide exchange rates and a fairly low GTP hydrolysis rate. Plays a role in control of the cell cycle, stress response, ribosome biogenesis and in those bacteria that undergo differentiation, in morphogenesis control.</text>
</comment>
<comment type="cofactor">
    <cofactor evidence="1">
        <name>Mg(2+)</name>
        <dbReference type="ChEBI" id="CHEBI:18420"/>
    </cofactor>
</comment>
<comment type="subunit">
    <text evidence="1">Monomer.</text>
</comment>
<comment type="subcellular location">
    <subcellularLocation>
        <location evidence="1">Cytoplasm</location>
    </subcellularLocation>
</comment>
<comment type="similarity">
    <text evidence="1">Belongs to the TRAFAC class OBG-HflX-like GTPase superfamily. OBG GTPase family.</text>
</comment>
<accession>A5CR32</accession>
<reference key="1">
    <citation type="journal article" date="2008" name="J. Bacteriol.">
        <title>The genome sequence of the tomato-pathogenic actinomycete Clavibacter michiganensis subsp. michiganensis NCPPB382 reveals a large island involved in pathogenicity.</title>
        <authorList>
            <person name="Gartemann K.-H."/>
            <person name="Abt B."/>
            <person name="Bekel T."/>
            <person name="Burger A."/>
            <person name="Engemann J."/>
            <person name="Fluegel M."/>
            <person name="Gaigalat L."/>
            <person name="Goesmann A."/>
            <person name="Graefen I."/>
            <person name="Kalinowski J."/>
            <person name="Kaup O."/>
            <person name="Kirchner O."/>
            <person name="Krause L."/>
            <person name="Linke B."/>
            <person name="McHardy A."/>
            <person name="Meyer F."/>
            <person name="Pohle S."/>
            <person name="Rueckert C."/>
            <person name="Schneiker S."/>
            <person name="Zellermann E.-M."/>
            <person name="Puehler A."/>
            <person name="Eichenlaub R."/>
            <person name="Kaiser O."/>
            <person name="Bartels D."/>
        </authorList>
    </citation>
    <scope>NUCLEOTIDE SEQUENCE [LARGE SCALE GENOMIC DNA]</scope>
    <source>
        <strain>NCPPB 382</strain>
    </source>
</reference>
<sequence length="512" mass="54288">MATFVDTVTLHLRAGNGGNGCVSVRREKFKPLAGPDGGNGGNGGDIVLVADPQVTTLLAYHRGPHRSSRNGGPGMGDHRHGTLGEALELHVPVGTVVKDADGNELADMATPGMRFIAAEAGQGGLGNASLATTKRKAPGFALLGTRGYEGDVVLELKVVADVALVGYPSAGKSSLVAAISAAKPKIADYPFTTLHPNLGVVEVADSRYTVADVPGLIEGASEGKGLGLEFLRHVERCSALLHVLDCATLDPGRDPISDLDIILTELAAYPVPDGQVPLLDRPQLIALNKIDVPEARELAELVRPELEARGYRVFDISTVSHDGLRQLSFALAELVEDARTKAAEEPEAPRIVLRPRAVNEKPFTIRVDGGSYGDIYRVIGTKPERWVQQTDFTNDEAVGYLADRLAKLGVEDGLFKAGAVAGSSVVIGEGDGIVFDWEPTLTSTAELITSPRGADARVDPISRRTNQARREDYFARMDAKAEARAQLVREGEAGLWADEDGTDEDASSDAKA</sequence>
<evidence type="ECO:0000255" key="1">
    <source>
        <dbReference type="HAMAP-Rule" id="MF_01454"/>
    </source>
</evidence>
<evidence type="ECO:0000255" key="2">
    <source>
        <dbReference type="PROSITE-ProRule" id="PRU01229"/>
    </source>
</evidence>
<evidence type="ECO:0000255" key="3">
    <source>
        <dbReference type="PROSITE-ProRule" id="PRU01231"/>
    </source>
</evidence>
<evidence type="ECO:0000256" key="4">
    <source>
        <dbReference type="SAM" id="MobiDB-lite"/>
    </source>
</evidence>
<organism>
    <name type="scientific">Clavibacter michiganensis subsp. michiganensis (strain NCPPB 382)</name>
    <dbReference type="NCBI Taxonomy" id="443906"/>
    <lineage>
        <taxon>Bacteria</taxon>
        <taxon>Bacillati</taxon>
        <taxon>Actinomycetota</taxon>
        <taxon>Actinomycetes</taxon>
        <taxon>Micrococcales</taxon>
        <taxon>Microbacteriaceae</taxon>
        <taxon>Clavibacter</taxon>
    </lineage>
</organism>